<comment type="catalytic activity">
    <reaction evidence="1">
        <text>tRNA(His) + L-histidine + ATP = L-histidyl-tRNA(His) + AMP + diphosphate + H(+)</text>
        <dbReference type="Rhea" id="RHEA:17313"/>
        <dbReference type="Rhea" id="RHEA-COMP:9665"/>
        <dbReference type="Rhea" id="RHEA-COMP:9689"/>
        <dbReference type="ChEBI" id="CHEBI:15378"/>
        <dbReference type="ChEBI" id="CHEBI:30616"/>
        <dbReference type="ChEBI" id="CHEBI:33019"/>
        <dbReference type="ChEBI" id="CHEBI:57595"/>
        <dbReference type="ChEBI" id="CHEBI:78442"/>
        <dbReference type="ChEBI" id="CHEBI:78527"/>
        <dbReference type="ChEBI" id="CHEBI:456215"/>
        <dbReference type="EC" id="6.1.1.21"/>
    </reaction>
</comment>
<comment type="subunit">
    <text evidence="1">Homodimer.</text>
</comment>
<comment type="subcellular location">
    <subcellularLocation>
        <location evidence="1">Cytoplasm</location>
    </subcellularLocation>
</comment>
<comment type="similarity">
    <text evidence="1">Belongs to the class-II aminoacyl-tRNA synthetase family.</text>
</comment>
<dbReference type="EC" id="6.1.1.21" evidence="1"/>
<dbReference type="EMBL" id="CP001015">
    <property type="protein sequence ID" value="ACF54901.1"/>
    <property type="molecule type" value="Genomic_DNA"/>
</dbReference>
<dbReference type="KEGG" id="spx:SPG_2058"/>
<dbReference type="HOGENOM" id="CLU_025113_1_1_9"/>
<dbReference type="GO" id="GO:0005737">
    <property type="term" value="C:cytoplasm"/>
    <property type="evidence" value="ECO:0007669"/>
    <property type="project" value="UniProtKB-SubCell"/>
</dbReference>
<dbReference type="GO" id="GO:0005524">
    <property type="term" value="F:ATP binding"/>
    <property type="evidence" value="ECO:0007669"/>
    <property type="project" value="UniProtKB-UniRule"/>
</dbReference>
<dbReference type="GO" id="GO:0140096">
    <property type="term" value="F:catalytic activity, acting on a protein"/>
    <property type="evidence" value="ECO:0007669"/>
    <property type="project" value="UniProtKB-ARBA"/>
</dbReference>
<dbReference type="GO" id="GO:0004821">
    <property type="term" value="F:histidine-tRNA ligase activity"/>
    <property type="evidence" value="ECO:0007669"/>
    <property type="project" value="UniProtKB-UniRule"/>
</dbReference>
<dbReference type="GO" id="GO:0016740">
    <property type="term" value="F:transferase activity"/>
    <property type="evidence" value="ECO:0007669"/>
    <property type="project" value="UniProtKB-ARBA"/>
</dbReference>
<dbReference type="GO" id="GO:0006427">
    <property type="term" value="P:histidyl-tRNA aminoacylation"/>
    <property type="evidence" value="ECO:0007669"/>
    <property type="project" value="UniProtKB-UniRule"/>
</dbReference>
<dbReference type="CDD" id="cd00773">
    <property type="entry name" value="HisRS-like_core"/>
    <property type="match status" value="1"/>
</dbReference>
<dbReference type="CDD" id="cd00859">
    <property type="entry name" value="HisRS_anticodon"/>
    <property type="match status" value="1"/>
</dbReference>
<dbReference type="FunFam" id="3.30.930.10:FF:000005">
    <property type="entry name" value="Histidine--tRNA ligase"/>
    <property type="match status" value="1"/>
</dbReference>
<dbReference type="FunFam" id="3.40.50.800:FF:000022">
    <property type="entry name" value="Histidine--tRNA ligase"/>
    <property type="match status" value="1"/>
</dbReference>
<dbReference type="Gene3D" id="3.40.50.800">
    <property type="entry name" value="Anticodon-binding domain"/>
    <property type="match status" value="1"/>
</dbReference>
<dbReference type="Gene3D" id="3.30.930.10">
    <property type="entry name" value="Bira Bifunctional Protein, Domain 2"/>
    <property type="match status" value="1"/>
</dbReference>
<dbReference type="HAMAP" id="MF_00127">
    <property type="entry name" value="His_tRNA_synth"/>
    <property type="match status" value="1"/>
</dbReference>
<dbReference type="InterPro" id="IPR006195">
    <property type="entry name" value="aa-tRNA-synth_II"/>
</dbReference>
<dbReference type="InterPro" id="IPR045864">
    <property type="entry name" value="aa-tRNA-synth_II/BPL/LPL"/>
</dbReference>
<dbReference type="InterPro" id="IPR004154">
    <property type="entry name" value="Anticodon-bd"/>
</dbReference>
<dbReference type="InterPro" id="IPR036621">
    <property type="entry name" value="Anticodon-bd_dom_sf"/>
</dbReference>
<dbReference type="InterPro" id="IPR015807">
    <property type="entry name" value="His-tRNA-ligase"/>
</dbReference>
<dbReference type="InterPro" id="IPR041715">
    <property type="entry name" value="HisRS-like_core"/>
</dbReference>
<dbReference type="InterPro" id="IPR004516">
    <property type="entry name" value="HisRS/HisZ"/>
</dbReference>
<dbReference type="InterPro" id="IPR033656">
    <property type="entry name" value="HisRS_anticodon"/>
</dbReference>
<dbReference type="NCBIfam" id="TIGR00442">
    <property type="entry name" value="hisS"/>
    <property type="match status" value="1"/>
</dbReference>
<dbReference type="PANTHER" id="PTHR43707:SF1">
    <property type="entry name" value="HISTIDINE--TRNA LIGASE, MITOCHONDRIAL-RELATED"/>
    <property type="match status" value="1"/>
</dbReference>
<dbReference type="PANTHER" id="PTHR43707">
    <property type="entry name" value="HISTIDYL-TRNA SYNTHETASE"/>
    <property type="match status" value="1"/>
</dbReference>
<dbReference type="Pfam" id="PF03129">
    <property type="entry name" value="HGTP_anticodon"/>
    <property type="match status" value="1"/>
</dbReference>
<dbReference type="Pfam" id="PF13393">
    <property type="entry name" value="tRNA-synt_His"/>
    <property type="match status" value="1"/>
</dbReference>
<dbReference type="PIRSF" id="PIRSF001549">
    <property type="entry name" value="His-tRNA_synth"/>
    <property type="match status" value="1"/>
</dbReference>
<dbReference type="SUPFAM" id="SSF52954">
    <property type="entry name" value="Class II aaRS ABD-related"/>
    <property type="match status" value="1"/>
</dbReference>
<dbReference type="SUPFAM" id="SSF55681">
    <property type="entry name" value="Class II aaRS and biotin synthetases"/>
    <property type="match status" value="1"/>
</dbReference>
<dbReference type="PROSITE" id="PS50862">
    <property type="entry name" value="AA_TRNA_LIGASE_II"/>
    <property type="match status" value="1"/>
</dbReference>
<proteinExistence type="inferred from homology"/>
<protein>
    <recommendedName>
        <fullName evidence="1">Histidine--tRNA ligase</fullName>
        <ecNumber evidence="1">6.1.1.21</ecNumber>
    </recommendedName>
    <alternativeName>
        <fullName evidence="1">Histidyl-tRNA synthetase</fullName>
        <shortName evidence="1">HisRS</shortName>
    </alternativeName>
</protein>
<keyword id="KW-0030">Aminoacyl-tRNA synthetase</keyword>
<keyword id="KW-0067">ATP-binding</keyword>
<keyword id="KW-0963">Cytoplasm</keyword>
<keyword id="KW-0436">Ligase</keyword>
<keyword id="KW-0547">Nucleotide-binding</keyword>
<keyword id="KW-0648">Protein biosynthesis</keyword>
<accession>B5E3C8</accession>
<feature type="chain" id="PRO_1000095599" description="Histidine--tRNA ligase">
    <location>
        <begin position="1"/>
        <end position="429"/>
    </location>
</feature>
<evidence type="ECO:0000255" key="1">
    <source>
        <dbReference type="HAMAP-Rule" id="MF_00127"/>
    </source>
</evidence>
<reference key="1">
    <citation type="journal article" date="2001" name="Microb. Drug Resist.">
        <title>Annotated draft genomic sequence from a Streptococcus pneumoniae type 19F clinical isolate.</title>
        <authorList>
            <person name="Dopazo J."/>
            <person name="Mendoza A."/>
            <person name="Herrero J."/>
            <person name="Caldara F."/>
            <person name="Humbert Y."/>
            <person name="Friedli L."/>
            <person name="Guerrier M."/>
            <person name="Grand-Schenk E."/>
            <person name="Gandin C."/>
            <person name="de Francesco M."/>
            <person name="Polissi A."/>
            <person name="Buell G."/>
            <person name="Feger G."/>
            <person name="Garcia E."/>
            <person name="Peitsch M."/>
            <person name="Garcia-Bustos J.F."/>
        </authorList>
    </citation>
    <scope>NUCLEOTIDE SEQUENCE [LARGE SCALE GENOMIC DNA]</scope>
    <source>
        <strain>G54</strain>
    </source>
</reference>
<reference key="2">
    <citation type="submission" date="2008-03" db="EMBL/GenBank/DDBJ databases">
        <title>Pneumococcal beta glucoside metabolism investigated by whole genome comparison.</title>
        <authorList>
            <person name="Mulas L."/>
            <person name="Trappetti C."/>
            <person name="Hakenbeck R."/>
            <person name="Iannelli F."/>
            <person name="Pozzi G."/>
            <person name="Davidsen T.M."/>
            <person name="Tettelin H."/>
            <person name="Oggioni M."/>
        </authorList>
    </citation>
    <scope>NUCLEOTIDE SEQUENCE [LARGE SCALE GENOMIC DNA]</scope>
    <source>
        <strain>G54</strain>
    </source>
</reference>
<gene>
    <name evidence="1" type="primary">hisS</name>
    <name type="ordered locus">SPG_2058</name>
</gene>
<organism>
    <name type="scientific">Streptococcus pneumoniae serotype 19F (strain G54)</name>
    <dbReference type="NCBI Taxonomy" id="512566"/>
    <lineage>
        <taxon>Bacteria</taxon>
        <taxon>Bacillati</taxon>
        <taxon>Bacillota</taxon>
        <taxon>Bacilli</taxon>
        <taxon>Lactobacillales</taxon>
        <taxon>Streptococcaceae</taxon>
        <taxon>Streptococcus</taxon>
    </lineage>
</organism>
<name>SYH_STRP4</name>
<sequence>MKLQKPKGTQDILPAESAKWQYVEGFAREIFKRYNYAEVRTPIFEHYEVISRSVGDTTDIVTKEMYDFYDKGDRHITLRPEGTAPVVRSYVENKLFAPEVQKPSKFYYMGPMFRYERPQAGRLRQFHQIGVECFGSSNPATDVXTIVMAAHFLKEIGIQGVKLHLNTLGNPESRAAYRQALIDYLTPLKETLSKDSQRRLEENPLRVLDSKEKEDKVAVENAPSILDFLDEESQAHFDAVRQMLENLGVDYIIDTNMVRGLDYYNHTIFEFITEIEGNDLTVCAGGRYDGLVAYFGGPETAGFGFGLGVERLLLILEKQGVALPIENALDVYIAVLGDGANVKALELVQALRQQGFKAERDYLNRKLKAQFKSADVFATKTLITLGESEVESGQVTVKNNQTREEVQVSLETISQNFSEIFEKLGFYTQ</sequence>